<organism>
    <name type="scientific">Drosophila affinis</name>
    <name type="common">Fruit fly</name>
    <dbReference type="NCBI Taxonomy" id="7246"/>
    <lineage>
        <taxon>Eukaryota</taxon>
        <taxon>Metazoa</taxon>
        <taxon>Ecdysozoa</taxon>
        <taxon>Arthropoda</taxon>
        <taxon>Hexapoda</taxon>
        <taxon>Insecta</taxon>
        <taxon>Pterygota</taxon>
        <taxon>Neoptera</taxon>
        <taxon>Endopterygota</taxon>
        <taxon>Diptera</taxon>
        <taxon>Brachycera</taxon>
        <taxon>Muscomorpha</taxon>
        <taxon>Ephydroidea</taxon>
        <taxon>Drosophilidae</taxon>
        <taxon>Drosophila</taxon>
        <taxon>Sophophora</taxon>
    </lineage>
</organism>
<geneLocation type="mitochondrion"/>
<feature type="chain" id="PRO_0000183572" description="Cytochrome c oxidase subunit 2">
    <location>
        <begin position="1"/>
        <end position="229"/>
    </location>
</feature>
<feature type="topological domain" description="Mitochondrial intermembrane" evidence="2">
    <location>
        <begin position="1"/>
        <end position="26"/>
    </location>
</feature>
<feature type="transmembrane region" description="Helical" evidence="2">
    <location>
        <begin position="27"/>
        <end position="48"/>
    </location>
</feature>
<feature type="topological domain" description="Mitochondrial matrix" evidence="2">
    <location>
        <begin position="49"/>
        <end position="62"/>
    </location>
</feature>
<feature type="transmembrane region" description="Helical" evidence="2">
    <location>
        <begin position="63"/>
        <end position="82"/>
    </location>
</feature>
<feature type="topological domain" description="Mitochondrial intermembrane" evidence="2">
    <location>
        <begin position="83"/>
        <end position="229"/>
    </location>
</feature>
<feature type="binding site" evidence="1">
    <location>
        <position position="161"/>
    </location>
    <ligand>
        <name>Cu cation</name>
        <dbReference type="ChEBI" id="CHEBI:23378"/>
        <label>A1</label>
    </ligand>
</feature>
<feature type="binding site" evidence="1">
    <location>
        <position position="196"/>
    </location>
    <ligand>
        <name>Cu cation</name>
        <dbReference type="ChEBI" id="CHEBI:23378"/>
        <label>A1</label>
    </ligand>
</feature>
<feature type="binding site" evidence="1">
    <location>
        <position position="196"/>
    </location>
    <ligand>
        <name>Cu cation</name>
        <dbReference type="ChEBI" id="CHEBI:23378"/>
        <label>A2</label>
    </ligand>
</feature>
<feature type="binding site" evidence="1">
    <location>
        <position position="198"/>
    </location>
    <ligand>
        <name>Cu cation</name>
        <dbReference type="ChEBI" id="CHEBI:23378"/>
        <label>A2</label>
    </ligand>
</feature>
<feature type="binding site" evidence="1">
    <location>
        <position position="198"/>
    </location>
    <ligand>
        <name>Mg(2+)</name>
        <dbReference type="ChEBI" id="CHEBI:18420"/>
        <note>ligand shared with subunit 1</note>
    </ligand>
</feature>
<feature type="binding site" evidence="1">
    <location>
        <position position="200"/>
    </location>
    <ligand>
        <name>Cu cation</name>
        <dbReference type="ChEBI" id="CHEBI:23378"/>
        <label>A1</label>
    </ligand>
</feature>
<feature type="binding site" evidence="1">
    <location>
        <position position="200"/>
    </location>
    <ligand>
        <name>Cu cation</name>
        <dbReference type="ChEBI" id="CHEBI:23378"/>
        <label>A2</label>
    </ligand>
</feature>
<feature type="binding site" evidence="1">
    <location>
        <position position="204"/>
    </location>
    <ligand>
        <name>Cu cation</name>
        <dbReference type="ChEBI" id="CHEBI:23378"/>
        <label>A2</label>
    </ligand>
</feature>
<feature type="binding site" evidence="1">
    <location>
        <position position="207"/>
    </location>
    <ligand>
        <name>Cu cation</name>
        <dbReference type="ChEBI" id="CHEBI:23378"/>
        <label>A1</label>
    </ligand>
</feature>
<feature type="sequence conflict" description="In Ref. 2; AAO21004." evidence="3" ref="2">
    <original>DH</original>
    <variation>VL</variation>
    <location>
        <begin position="25"/>
        <end position="26"/>
    </location>
</feature>
<evidence type="ECO:0000250" key="1">
    <source>
        <dbReference type="UniProtKB" id="P00410"/>
    </source>
</evidence>
<evidence type="ECO:0000255" key="2"/>
<evidence type="ECO:0000305" key="3"/>
<name>COX2_DROAI</name>
<sequence>MSTWANLGLQDSASPLMEQLIFFHDHALLILVMITVLVGYLMFMLFFNSYVNRFLLHGQLIEMIWTILPAIILLFIAMPSLRLLYLLDEINEPSITLKSIGHQWYWSYEYSDFNNVEFDSYMIPTNELANDGFRLLDVDNRIVLPMNSQIRILVTAADVIHSWTVPALGVKVDGTPGRLNQTNFFINRPGLFYGQCSEICGANHSFMPIVIESVPVNYFIKWISNSVNS</sequence>
<comment type="function">
    <text evidence="1">Component of the cytochrome c oxidase, the last enzyme in the mitochondrial electron transport chain which drives oxidative phosphorylation. The respiratory chain contains 3 multisubunit complexes succinate dehydrogenase (complex II, CII), ubiquinol-cytochrome c oxidoreductase (cytochrome b-c1 complex, complex III, CIII) and cytochrome c oxidase (complex IV, CIV), that cooperate to transfer electrons derived from NADH and succinate to molecular oxygen, creating an electrochemical gradient over the inner membrane that drives transmembrane transport and the ATP synthase. Cytochrome c oxidase is the component of the respiratory chain that catalyzes the reduction of oxygen to water. Electrons originating from reduced cytochrome c in the intermembrane space (IMS) are transferred via the dinuclear copper A center (CU(A)) of subunit 2 and heme A of subunit 1 to the active site in subunit 1, a binuclear center (BNC) formed by heme A3 and copper B (CU(B)). The BNC reduces molecular oxygen to 2 water molecules using 4 electrons from cytochrome c in the IMS and 4 protons from the mitochondrial matrix.</text>
</comment>
<comment type="catalytic activity">
    <reaction evidence="1">
        <text>4 Fe(II)-[cytochrome c] + O2 + 8 H(+)(in) = 4 Fe(III)-[cytochrome c] + 2 H2O + 4 H(+)(out)</text>
        <dbReference type="Rhea" id="RHEA:11436"/>
        <dbReference type="Rhea" id="RHEA-COMP:10350"/>
        <dbReference type="Rhea" id="RHEA-COMP:14399"/>
        <dbReference type="ChEBI" id="CHEBI:15377"/>
        <dbReference type="ChEBI" id="CHEBI:15378"/>
        <dbReference type="ChEBI" id="CHEBI:15379"/>
        <dbReference type="ChEBI" id="CHEBI:29033"/>
        <dbReference type="ChEBI" id="CHEBI:29034"/>
        <dbReference type="EC" id="7.1.1.9"/>
    </reaction>
    <physiologicalReaction direction="left-to-right" evidence="1">
        <dbReference type="Rhea" id="RHEA:11437"/>
    </physiologicalReaction>
</comment>
<comment type="cofactor">
    <cofactor evidence="1">
        <name>Cu cation</name>
        <dbReference type="ChEBI" id="CHEBI:23378"/>
    </cofactor>
    <text evidence="1">Binds a dinuclear copper A center per subunit.</text>
</comment>
<comment type="subunit">
    <text evidence="1">Component of the cytochrome c oxidase (complex IV, CIV), a multisubunit enzyme composed of a catalytic core of 3 subunits and several supernumerary subunits. The complex exists as a monomer or a dimer and forms supercomplexes (SCs) in the inner mitochondrial membrane with ubiquinol-cytochrome c oxidoreductase (cytochrome b-c1 complex, complex III, CIII).</text>
</comment>
<comment type="subcellular location">
    <subcellularLocation>
        <location evidence="1">Mitochondrion inner membrane</location>
        <topology evidence="1">Multi-pass membrane protein</topology>
    </subcellularLocation>
</comment>
<comment type="similarity">
    <text evidence="3">Belongs to the cytochrome c oxidase subunit 2 family.</text>
</comment>
<accession>Q85TA0</accession>
<accession>B2L9S4</accession>
<accession>P29854</accession>
<accession>P29855</accession>
<accession>P29857</accession>
<accession>P29858</accession>
<dbReference type="EC" id="7.1.1.9"/>
<dbReference type="EMBL" id="M95140">
    <property type="protein sequence ID" value="AAA02770.2"/>
    <property type="molecule type" value="Genomic_DNA"/>
</dbReference>
<dbReference type="EMBL" id="AF519346">
    <property type="protein sequence ID" value="AAO21004.1"/>
    <property type="molecule type" value="Genomic_DNA"/>
</dbReference>
<dbReference type="EMBL" id="EU493758">
    <property type="protein sequence ID" value="ACC94835.1"/>
    <property type="molecule type" value="Genomic_DNA"/>
</dbReference>
<dbReference type="SMR" id="Q85TA0"/>
<dbReference type="GO" id="GO:0005743">
    <property type="term" value="C:mitochondrial inner membrane"/>
    <property type="evidence" value="ECO:0007669"/>
    <property type="project" value="UniProtKB-SubCell"/>
</dbReference>
<dbReference type="GO" id="GO:0005507">
    <property type="term" value="F:copper ion binding"/>
    <property type="evidence" value="ECO:0007669"/>
    <property type="project" value="InterPro"/>
</dbReference>
<dbReference type="GO" id="GO:0004129">
    <property type="term" value="F:cytochrome-c oxidase activity"/>
    <property type="evidence" value="ECO:0007669"/>
    <property type="project" value="UniProtKB-EC"/>
</dbReference>
<dbReference type="GO" id="GO:0042773">
    <property type="term" value="P:ATP synthesis coupled electron transport"/>
    <property type="evidence" value="ECO:0007669"/>
    <property type="project" value="TreeGrafter"/>
</dbReference>
<dbReference type="CDD" id="cd13912">
    <property type="entry name" value="CcO_II_C"/>
    <property type="match status" value="1"/>
</dbReference>
<dbReference type="FunFam" id="1.10.287.90:FF:000006">
    <property type="entry name" value="Cytochrome c oxidase subunit 2"/>
    <property type="match status" value="1"/>
</dbReference>
<dbReference type="FunFam" id="2.60.40.420:FF:000001">
    <property type="entry name" value="Cytochrome c oxidase subunit 2"/>
    <property type="match status" value="1"/>
</dbReference>
<dbReference type="Gene3D" id="1.10.287.90">
    <property type="match status" value="1"/>
</dbReference>
<dbReference type="Gene3D" id="2.60.40.420">
    <property type="entry name" value="Cupredoxins - blue copper proteins"/>
    <property type="match status" value="1"/>
</dbReference>
<dbReference type="InterPro" id="IPR045187">
    <property type="entry name" value="CcO_II"/>
</dbReference>
<dbReference type="InterPro" id="IPR002429">
    <property type="entry name" value="CcO_II-like_C"/>
</dbReference>
<dbReference type="InterPro" id="IPR034210">
    <property type="entry name" value="CcO_II_C"/>
</dbReference>
<dbReference type="InterPro" id="IPR001505">
    <property type="entry name" value="Copper_CuA"/>
</dbReference>
<dbReference type="InterPro" id="IPR008972">
    <property type="entry name" value="Cupredoxin"/>
</dbReference>
<dbReference type="InterPro" id="IPR014222">
    <property type="entry name" value="Cyt_c_oxidase_su2"/>
</dbReference>
<dbReference type="InterPro" id="IPR011759">
    <property type="entry name" value="Cyt_c_oxidase_su2_TM_dom"/>
</dbReference>
<dbReference type="InterPro" id="IPR036257">
    <property type="entry name" value="Cyt_c_oxidase_su2_TM_sf"/>
</dbReference>
<dbReference type="NCBIfam" id="TIGR02866">
    <property type="entry name" value="CoxB"/>
    <property type="match status" value="1"/>
</dbReference>
<dbReference type="PANTHER" id="PTHR22888:SF9">
    <property type="entry name" value="CYTOCHROME C OXIDASE SUBUNIT 2"/>
    <property type="match status" value="1"/>
</dbReference>
<dbReference type="PANTHER" id="PTHR22888">
    <property type="entry name" value="CYTOCHROME C OXIDASE, SUBUNIT II"/>
    <property type="match status" value="1"/>
</dbReference>
<dbReference type="Pfam" id="PF00116">
    <property type="entry name" value="COX2"/>
    <property type="match status" value="1"/>
</dbReference>
<dbReference type="Pfam" id="PF02790">
    <property type="entry name" value="COX2_TM"/>
    <property type="match status" value="1"/>
</dbReference>
<dbReference type="PRINTS" id="PR01166">
    <property type="entry name" value="CYCOXIDASEII"/>
</dbReference>
<dbReference type="SUPFAM" id="SSF49503">
    <property type="entry name" value="Cupredoxins"/>
    <property type="match status" value="1"/>
</dbReference>
<dbReference type="SUPFAM" id="SSF81464">
    <property type="entry name" value="Cytochrome c oxidase subunit II-like, transmembrane region"/>
    <property type="match status" value="1"/>
</dbReference>
<dbReference type="PROSITE" id="PS00078">
    <property type="entry name" value="COX2"/>
    <property type="match status" value="1"/>
</dbReference>
<dbReference type="PROSITE" id="PS50857">
    <property type="entry name" value="COX2_CUA"/>
    <property type="match status" value="1"/>
</dbReference>
<dbReference type="PROSITE" id="PS50999">
    <property type="entry name" value="COX2_TM"/>
    <property type="match status" value="1"/>
</dbReference>
<proteinExistence type="inferred from homology"/>
<keyword id="KW-0186">Copper</keyword>
<keyword id="KW-0249">Electron transport</keyword>
<keyword id="KW-0460">Magnesium</keyword>
<keyword id="KW-0472">Membrane</keyword>
<keyword id="KW-0479">Metal-binding</keyword>
<keyword id="KW-0496">Mitochondrion</keyword>
<keyword id="KW-0999">Mitochondrion inner membrane</keyword>
<keyword id="KW-0679">Respiratory chain</keyword>
<keyword id="KW-1278">Translocase</keyword>
<keyword id="KW-0812">Transmembrane</keyword>
<keyword id="KW-1133">Transmembrane helix</keyword>
<keyword id="KW-0813">Transport</keyword>
<reference key="1">
    <citation type="journal article" date="1993" name="Mol. Biol. Evol.">
        <title>Relationships in the Drosophila obscura species group, inferred from mitochondrial cytochrome oxidase II sequences.</title>
        <authorList>
            <person name="Beckenbach A.T."/>
            <person name="Wei Y.W."/>
            <person name="Liu H."/>
        </authorList>
    </citation>
    <scope>NUCLEOTIDE SEQUENCE [GENOMIC DNA]</scope>
</reference>
<reference key="2">
    <citation type="journal article" date="2003" name="Mol. Ecol.">
        <title>Associations between mycophagous Drosophila and their Howardula nematode parasites: a worldwide phylogenetic shuffle.</title>
        <authorList>
            <person name="Perlman S.J."/>
            <person name="Spicer G.S."/>
            <person name="Shoemaker D.D."/>
            <person name="Jaenike J."/>
        </authorList>
    </citation>
    <scope>NUCLEOTIDE SEQUENCE [GENOMIC DNA]</scope>
</reference>
<reference key="3">
    <citation type="journal article" date="2008" name="Biol. Lett.">
        <title>Out of Hawaii: the origin and biogeography of the genus Scaptomyza (Diptera: Drosophilidae).</title>
        <authorList>
            <person name="O'Grady P.M."/>
            <person name="DeSalle R."/>
        </authorList>
    </citation>
    <scope>NUCLEOTIDE SEQUENCE [GENOMIC DNA]</scope>
</reference>
<protein>
    <recommendedName>
        <fullName>Cytochrome c oxidase subunit 2</fullName>
        <ecNumber>7.1.1.9</ecNumber>
    </recommendedName>
    <alternativeName>
        <fullName>Cytochrome c oxidase polypeptide II</fullName>
    </alternativeName>
</protein>
<gene>
    <name type="primary">mt:CoII</name>
    <name type="synonym">CoII</name>
</gene>